<organism>
    <name type="scientific">Bos taurus</name>
    <name type="common">Bovine</name>
    <dbReference type="NCBI Taxonomy" id="9913"/>
    <lineage>
        <taxon>Eukaryota</taxon>
        <taxon>Metazoa</taxon>
        <taxon>Chordata</taxon>
        <taxon>Craniata</taxon>
        <taxon>Vertebrata</taxon>
        <taxon>Euteleostomi</taxon>
        <taxon>Mammalia</taxon>
        <taxon>Eutheria</taxon>
        <taxon>Laurasiatheria</taxon>
        <taxon>Artiodactyla</taxon>
        <taxon>Ruminantia</taxon>
        <taxon>Pecora</taxon>
        <taxon>Bovidae</taxon>
        <taxon>Bovinae</taxon>
        <taxon>Bos</taxon>
    </lineage>
</organism>
<evidence type="ECO:0000250" key="1">
    <source>
        <dbReference type="UniProtKB" id="A9C3R9"/>
    </source>
</evidence>
<evidence type="ECO:0000250" key="2">
    <source>
        <dbReference type="UniProtKB" id="Q16518"/>
    </source>
</evidence>
<evidence type="ECO:0000269" key="3">
    <source>
    </source>
</evidence>
<evidence type="ECO:0000269" key="4">
    <source>
    </source>
</evidence>
<evidence type="ECO:0000269" key="5">
    <source>
    </source>
</evidence>
<evidence type="ECO:0000269" key="6">
    <source>
    </source>
</evidence>
<evidence type="ECO:0000269" key="7">
    <source>
    </source>
</evidence>
<evidence type="ECO:0000305" key="8"/>
<evidence type="ECO:0007829" key="9">
    <source>
        <dbReference type="PDB" id="3FSN"/>
    </source>
</evidence>
<evidence type="ECO:0007829" key="10">
    <source>
        <dbReference type="PDB" id="4F2Z"/>
    </source>
</evidence>
<evidence type="ECO:0007829" key="11">
    <source>
        <dbReference type="PDB" id="4RSC"/>
    </source>
</evidence>
<evidence type="ECO:0007829" key="12">
    <source>
        <dbReference type="PDB" id="4ZHK"/>
    </source>
</evidence>
<evidence type="ECO:0007829" key="13">
    <source>
        <dbReference type="PDB" id="7K88"/>
    </source>
</evidence>
<evidence type="ECO:0007829" key="14">
    <source>
        <dbReference type="PDB" id="7L0E"/>
    </source>
</evidence>
<sequence>MSSQVEHPAGGYKKLFETVEELSSPLTAHVTGRIPLWLTGSLLRCGPGLFEVGSEPFYHLFDGQALLHKFDFKEGHVTYHRRFIRTDAYVRAMTEKRIVITEFGTCAFPDPCKNIFSRFFSYFRGVEVTDNALVNIYPVGEDYYACTETNFITKVNPETLETIKQVDLCNYVSVNGATAHPHIENDGTVYNIGNCFGKNFSIAYNIVKIPPLQADKEDPISKSEIVVQFPCSDRFKPSYVHSFGLTPNYIVFVETPVKINLFKFLSSWSLWGANYMDCFESNETMGVWLHIADKKRKKYINNKYRTSPFNLFHHINTYEDHEFLIVDLCCWKGFEFVYNYLYLANLRENWEEVKKNARKAPQPEVRRYVLPLNIDKADTGKNLVTLPNTTATAILCSDETIWLEPEVLFSGPRQAFEFPQINYQKYGGKPYTYAYGLGLNHFVPDRLCKLNVKTKETWVWQEPDSYPSEPIFVSHPDALEEDDGVVLSVVVSPGAGQKPAYLLILNAKDLSEVARAEVEINIPVTFHGLFKKS</sequence>
<protein>
    <recommendedName>
        <fullName>Retinoid isomerohydrolase</fullName>
        <ecNumber evidence="4 6 7">3.1.1.64</ecNumber>
    </recommendedName>
    <alternativeName>
        <fullName>All-trans-retinyl-palmitate hydrolase</fullName>
    </alternativeName>
    <alternativeName>
        <fullName>Lutein isomerase</fullName>
    </alternativeName>
    <alternativeName>
        <fullName>Meso-zeaxanthin isomerase</fullName>
        <ecNumber evidence="2">5.3.3.22</ecNumber>
    </alternativeName>
    <alternativeName>
        <fullName>Retinal pigment epithelium-specific 65 kDa protein</fullName>
    </alternativeName>
    <alternativeName>
        <fullName>Retinol isomerase</fullName>
    </alternativeName>
</protein>
<keyword id="KW-0002">3D-structure</keyword>
<keyword id="KW-0007">Acetylation</keyword>
<keyword id="KW-1003">Cell membrane</keyword>
<keyword id="KW-0963">Cytoplasm</keyword>
<keyword id="KW-0903">Direct protein sequencing</keyword>
<keyword id="KW-0256">Endoplasmic reticulum</keyword>
<keyword id="KW-0378">Hydrolase</keyword>
<keyword id="KW-0408">Iron</keyword>
<keyword id="KW-0413">Isomerase</keyword>
<keyword id="KW-0443">Lipid metabolism</keyword>
<keyword id="KW-0449">Lipoprotein</keyword>
<keyword id="KW-0472">Membrane</keyword>
<keyword id="KW-0479">Metal-binding</keyword>
<keyword id="KW-0492">Microsome</keyword>
<keyword id="KW-0564">Palmitate</keyword>
<keyword id="KW-0597">Phosphoprotein</keyword>
<keyword id="KW-1185">Reference proteome</keyword>
<keyword id="KW-0716">Sensory transduction</keyword>
<keyword id="KW-0844">Vision</keyword>
<comment type="function">
    <text evidence="2 3 4 6 7">Critical isomerohydrolase in the retinoid cycle involved in regeneration of 11-cis-retinal, the chromophore of rod and cone opsins. Catalyzes the cleavage and isomerization of all-trans-retinyl fatty acid esters to 11-cis-retinol which is further oxidized by 11-cis retinol dehydrogenase to 11-cis-retinal for use as visual chromophore (PubMed:16096063, PubMed:19805034, PubMed:20100834). Essential for the production of 11-cis retinal for both rod and cone photoreceptors. Also capable of catalyzing the isomerization of lutein to meso-zeaxanthin an eye-specific carotenoid (By similarity). The soluble form binds vitamin A (all-trans-retinol), making it available for LRAT processing to all-trans-retinyl ester. The membrane form, palmitoylated by LRAT, binds all-trans-retinyl esters, making them available for IMH (isomerohydrolase) processing to all-cis-retinol. The soluble form is regenerated by transferring its palmitoyl groups onto 11-cis-retinol, a reaction catalyzed by LRAT (PubMed:15186777).</text>
</comment>
<comment type="catalytic activity">
    <reaction evidence="4 6 7">
        <text>an all-trans-retinyl ester + H2O = 11-cis-retinol + a fatty acid + H(+)</text>
        <dbReference type="Rhea" id="RHEA:31771"/>
        <dbReference type="ChEBI" id="CHEBI:15377"/>
        <dbReference type="ChEBI" id="CHEBI:15378"/>
        <dbReference type="ChEBI" id="CHEBI:16302"/>
        <dbReference type="ChEBI" id="CHEBI:28868"/>
        <dbReference type="ChEBI" id="CHEBI:63410"/>
        <dbReference type="EC" id="3.1.1.64"/>
    </reaction>
</comment>
<comment type="catalytic activity">
    <reaction evidence="2">
        <text>lutein = (3R,3'S)-zeaxanthin</text>
        <dbReference type="Rhea" id="RHEA:12729"/>
        <dbReference type="ChEBI" id="CHEBI:28838"/>
        <dbReference type="ChEBI" id="CHEBI:138919"/>
        <dbReference type="EC" id="5.3.3.22"/>
    </reaction>
</comment>
<comment type="catalytic activity">
    <reaction evidence="2">
        <text>all-trans-retinyl hexadecanoate + H2O = 11-cis-retinol + hexadecanoate + H(+)</text>
        <dbReference type="Rhea" id="RHEA:31775"/>
        <dbReference type="ChEBI" id="CHEBI:7896"/>
        <dbReference type="ChEBI" id="CHEBI:15377"/>
        <dbReference type="ChEBI" id="CHEBI:15378"/>
        <dbReference type="ChEBI" id="CHEBI:16302"/>
        <dbReference type="ChEBI" id="CHEBI:17616"/>
        <dbReference type="EC" id="3.1.1.64"/>
    </reaction>
</comment>
<comment type="cofactor">
    <cofactor evidence="6 7">
        <name>Fe(2+)</name>
        <dbReference type="ChEBI" id="CHEBI:29033"/>
    </cofactor>
    <text evidence="6 7">Binds 1 Fe(2+) ion per subunit.</text>
</comment>
<comment type="biophysicochemical properties">
    <kinetics>
        <KM evidence="4">7.1 uM for all-trans-retinyl palmitate</KM>
        <Vmax evidence="4">26.1 pmol/min/mg enzyme</Vmax>
    </kinetics>
</comment>
<comment type="subunit">
    <text evidence="2">Interacts with MYO7A; this mediates light-dependent intracellular transport of RPE65.</text>
</comment>
<comment type="interaction">
    <interactant intactId="EBI-15804453">
        <id>Q28175</id>
    </interactant>
    <interactant intactId="EBI-15804453">
        <id>Q28175</id>
        <label>RPE65</label>
    </interactant>
    <organismsDiffer>false</organismsDiffer>
    <experiments>2</experiments>
</comment>
<comment type="subcellular location">
    <subcellularLocation>
        <location evidence="1">Cytoplasm</location>
    </subcellularLocation>
    <subcellularLocation>
        <location evidence="6">Cell membrane</location>
        <topology evidence="6">Lipid-anchor</topology>
    </subcellularLocation>
    <subcellularLocation>
        <location evidence="6 7">Microsome membrane</location>
    </subcellularLocation>
    <text evidence="2 6">Undergoes light-dependent intracellular transport to become more concentrated in the central region of the retina pigment epithelium cells (By similarity). Attached to the membrane by a lipid anchor when palmitoylated (membrane form), soluble when unpalmitoylated.</text>
</comment>
<comment type="tissue specificity">
    <text evidence="6 7">Retinal pigment epithelium specific.</text>
</comment>
<comment type="PTM">
    <text evidence="3 5 6">Palmitoylation by LRAT regulates ligand binding specificity; the palmitoylated form (membrane form) specifically binds all-trans-retinyl-palmitate, while the soluble unpalmitoylated form binds all-trans-retinol (vitamin A).</text>
</comment>
<comment type="similarity">
    <text evidence="8">Belongs to the carotenoid oxygenase family.</text>
</comment>
<gene>
    <name type="primary">RPE65</name>
</gene>
<proteinExistence type="evidence at protein level"/>
<dbReference type="EC" id="3.1.1.64" evidence="4 6 7"/>
<dbReference type="EC" id="5.3.3.22" evidence="2"/>
<dbReference type="EMBL" id="L11356">
    <property type="protein sequence ID" value="AAC37306.1"/>
    <property type="molecule type" value="mRNA"/>
</dbReference>
<dbReference type="EMBL" id="X66277">
    <property type="protein sequence ID" value="CAA46988.1"/>
    <property type="molecule type" value="mRNA"/>
</dbReference>
<dbReference type="PIR" id="A47143">
    <property type="entry name" value="A47143"/>
</dbReference>
<dbReference type="RefSeq" id="NP_776878.1">
    <property type="nucleotide sequence ID" value="NM_174453.2"/>
</dbReference>
<dbReference type="PDB" id="3FSN">
    <property type="method" value="X-ray"/>
    <property type="resolution" value="2.14 A"/>
    <property type="chains" value="A/B=1-533"/>
</dbReference>
<dbReference type="PDB" id="3KVC">
    <property type="method" value="X-ray"/>
    <property type="resolution" value="1.90 A"/>
    <property type="chains" value="A/B=1-533"/>
</dbReference>
<dbReference type="PDB" id="4F2Z">
    <property type="method" value="X-ray"/>
    <property type="resolution" value="3.00 A"/>
    <property type="chains" value="A/E=1-533"/>
</dbReference>
<dbReference type="PDB" id="4F30">
    <property type="method" value="X-ray"/>
    <property type="resolution" value="3.15 A"/>
    <property type="chains" value="A=1-533"/>
</dbReference>
<dbReference type="PDB" id="4F3A">
    <property type="method" value="X-ray"/>
    <property type="resolution" value="2.60 A"/>
    <property type="chains" value="A=1-533"/>
</dbReference>
<dbReference type="PDB" id="4F3D">
    <property type="method" value="X-ray"/>
    <property type="resolution" value="2.50 A"/>
    <property type="chains" value="A/B=1-533"/>
</dbReference>
<dbReference type="PDB" id="4RSC">
    <property type="method" value="X-ray"/>
    <property type="resolution" value="1.80 A"/>
    <property type="chains" value="A/B=1-533"/>
</dbReference>
<dbReference type="PDB" id="4RSE">
    <property type="method" value="X-ray"/>
    <property type="resolution" value="2.39 A"/>
    <property type="chains" value="A/B=2-533"/>
</dbReference>
<dbReference type="PDB" id="4RYX">
    <property type="method" value="X-ray"/>
    <property type="resolution" value="2.00 A"/>
    <property type="chains" value="A=1-533"/>
</dbReference>
<dbReference type="PDB" id="4RYY">
    <property type="method" value="X-ray"/>
    <property type="resolution" value="2.30 A"/>
    <property type="chains" value="A/B=2-533"/>
</dbReference>
<dbReference type="PDB" id="4RYZ">
    <property type="method" value="X-ray"/>
    <property type="resolution" value="2.50 A"/>
    <property type="chains" value="A/B=2-533"/>
</dbReference>
<dbReference type="PDB" id="4ZHK">
    <property type="method" value="X-ray"/>
    <property type="resolution" value="2.09 A"/>
    <property type="chains" value="A/B=2-533"/>
</dbReference>
<dbReference type="PDB" id="5UL5">
    <property type="method" value="X-ray"/>
    <property type="resolution" value="2.20 A"/>
    <property type="chains" value="A/B=1-533"/>
</dbReference>
<dbReference type="PDB" id="5ULG">
    <property type="method" value="X-ray"/>
    <property type="resolution" value="2.10 A"/>
    <property type="chains" value="A/B=1-533"/>
</dbReference>
<dbReference type="PDB" id="7K88">
    <property type="method" value="X-ray"/>
    <property type="resolution" value="2.10 A"/>
    <property type="chains" value="A/B=2-533"/>
</dbReference>
<dbReference type="PDB" id="7K89">
    <property type="method" value="X-ray"/>
    <property type="resolution" value="2.15 A"/>
    <property type="chains" value="A/B=2-533"/>
</dbReference>
<dbReference type="PDB" id="7K8G">
    <property type="method" value="X-ray"/>
    <property type="resolution" value="1.95 A"/>
    <property type="chains" value="A/B=2-533"/>
</dbReference>
<dbReference type="PDB" id="7L0E">
    <property type="method" value="X-ray"/>
    <property type="resolution" value="1.90 A"/>
    <property type="chains" value="A/B=1-533"/>
</dbReference>
<dbReference type="PDB" id="8DOC">
    <property type="method" value="X-ray"/>
    <property type="resolution" value="2.10 A"/>
    <property type="chains" value="A=2-533"/>
</dbReference>
<dbReference type="PDBsum" id="3FSN"/>
<dbReference type="PDBsum" id="3KVC"/>
<dbReference type="PDBsum" id="4F2Z"/>
<dbReference type="PDBsum" id="4F30"/>
<dbReference type="PDBsum" id="4F3A"/>
<dbReference type="PDBsum" id="4F3D"/>
<dbReference type="PDBsum" id="4RSC"/>
<dbReference type="PDBsum" id="4RSE"/>
<dbReference type="PDBsum" id="4RYX"/>
<dbReference type="PDBsum" id="4RYY"/>
<dbReference type="PDBsum" id="4RYZ"/>
<dbReference type="PDBsum" id="4ZHK"/>
<dbReference type="PDBsum" id="5UL5"/>
<dbReference type="PDBsum" id="5ULG"/>
<dbReference type="PDBsum" id="7K88"/>
<dbReference type="PDBsum" id="7K89"/>
<dbReference type="PDBsum" id="7K8G"/>
<dbReference type="PDBsum" id="7L0E"/>
<dbReference type="PDBsum" id="8DOC"/>
<dbReference type="SMR" id="Q28175"/>
<dbReference type="CORUM" id="Q28175"/>
<dbReference type="DIP" id="DIP-48993N"/>
<dbReference type="FunCoup" id="Q28175">
    <property type="interactions" value="20"/>
</dbReference>
<dbReference type="STRING" id="9913.ENSBTAP00000041254"/>
<dbReference type="BindingDB" id="Q28175"/>
<dbReference type="ChEMBL" id="CHEMBL4523306"/>
<dbReference type="iPTMnet" id="Q28175"/>
<dbReference type="SwissPalm" id="Q28175"/>
<dbReference type="PaxDb" id="9913-ENSBTAP00000041254"/>
<dbReference type="Ensembl" id="ENSBTAT00000043702.2">
    <property type="protein sequence ID" value="ENSBTAP00000041254.1"/>
    <property type="gene ID" value="ENSBTAG00000020494.6"/>
</dbReference>
<dbReference type="GeneID" id="282043"/>
<dbReference type="KEGG" id="bta:282043"/>
<dbReference type="CTD" id="6121"/>
<dbReference type="VEuPathDB" id="HostDB:ENSBTAG00000020494"/>
<dbReference type="VGNC" id="VGNC:34101">
    <property type="gene designation" value="RPE65"/>
</dbReference>
<dbReference type="eggNOG" id="KOG1285">
    <property type="taxonomic scope" value="Eukaryota"/>
</dbReference>
<dbReference type="GeneTree" id="ENSGT00950000182913"/>
<dbReference type="HOGENOM" id="CLU_016472_1_1_1"/>
<dbReference type="InParanoid" id="Q28175"/>
<dbReference type="OMA" id="VHHPFDG"/>
<dbReference type="OrthoDB" id="1069523at2759"/>
<dbReference type="TreeFam" id="TF314019"/>
<dbReference type="BRENDA" id="3.1.1.64">
    <property type="organism ID" value="908"/>
</dbReference>
<dbReference type="Reactome" id="R-BTA-2453902">
    <property type="pathway name" value="The canonical retinoid cycle in rods (twilight vision)"/>
</dbReference>
<dbReference type="SABIO-RK" id="Q28175"/>
<dbReference type="EvolutionaryTrace" id="Q28175"/>
<dbReference type="Proteomes" id="UP000009136">
    <property type="component" value="Chromosome 3"/>
</dbReference>
<dbReference type="Bgee" id="ENSBTAG00000020494">
    <property type="expression patterns" value="Expressed in anterior segment of eyeball and 9 other cell types or tissues"/>
</dbReference>
<dbReference type="GO" id="GO:0005789">
    <property type="term" value="C:endoplasmic reticulum membrane"/>
    <property type="evidence" value="ECO:0000250"/>
    <property type="project" value="UniProtKB"/>
</dbReference>
<dbReference type="GO" id="GO:0016020">
    <property type="term" value="C:membrane"/>
    <property type="evidence" value="ECO:0000314"/>
    <property type="project" value="AgBase"/>
</dbReference>
<dbReference type="GO" id="GO:0005634">
    <property type="term" value="C:nucleus"/>
    <property type="evidence" value="ECO:0007669"/>
    <property type="project" value="Ensembl"/>
</dbReference>
<dbReference type="GO" id="GO:0005886">
    <property type="term" value="C:plasma membrane"/>
    <property type="evidence" value="ECO:0007669"/>
    <property type="project" value="UniProtKB-SubCell"/>
</dbReference>
<dbReference type="GO" id="GO:0052885">
    <property type="term" value="F:all-trans-retinyl-ester hydrolase, 11-cis retinol forming activity"/>
    <property type="evidence" value="ECO:0000314"/>
    <property type="project" value="AgBase"/>
</dbReference>
<dbReference type="GO" id="GO:0052884">
    <property type="term" value="F:all-trans-retinyl-palmitate hydrolase, 11-cis retinol forming activity"/>
    <property type="evidence" value="ECO:0000250"/>
    <property type="project" value="UniProtKB"/>
</dbReference>
<dbReference type="GO" id="GO:0003834">
    <property type="term" value="F:beta-carotene 15,15'-dioxygenase activity"/>
    <property type="evidence" value="ECO:0000318"/>
    <property type="project" value="GO_Central"/>
</dbReference>
<dbReference type="GO" id="GO:1901612">
    <property type="term" value="F:cardiolipin binding"/>
    <property type="evidence" value="ECO:0000314"/>
    <property type="project" value="AgBase"/>
</dbReference>
<dbReference type="GO" id="GO:0042802">
    <property type="term" value="F:identical protein binding"/>
    <property type="evidence" value="ECO:0000353"/>
    <property type="project" value="IntAct"/>
</dbReference>
<dbReference type="GO" id="GO:0046872">
    <property type="term" value="F:metal ion binding"/>
    <property type="evidence" value="ECO:0007669"/>
    <property type="project" value="UniProtKB-KW"/>
</dbReference>
<dbReference type="GO" id="GO:0031210">
    <property type="term" value="F:phosphatidylcholine binding"/>
    <property type="evidence" value="ECO:0000314"/>
    <property type="project" value="AgBase"/>
</dbReference>
<dbReference type="GO" id="GO:0001786">
    <property type="term" value="F:phosphatidylserine binding"/>
    <property type="evidence" value="ECO:0000314"/>
    <property type="project" value="AgBase"/>
</dbReference>
<dbReference type="GO" id="GO:0050251">
    <property type="term" value="F:retinol isomerase activity"/>
    <property type="evidence" value="ECO:0000318"/>
    <property type="project" value="GO_Central"/>
</dbReference>
<dbReference type="GO" id="GO:0050908">
    <property type="term" value="P:detection of light stimulus involved in visual perception"/>
    <property type="evidence" value="ECO:0007669"/>
    <property type="project" value="Ensembl"/>
</dbReference>
<dbReference type="GO" id="GO:0001895">
    <property type="term" value="P:retina homeostasis"/>
    <property type="evidence" value="ECO:0007669"/>
    <property type="project" value="Ensembl"/>
</dbReference>
<dbReference type="GO" id="GO:0042574">
    <property type="term" value="P:retinal metabolic process"/>
    <property type="evidence" value="ECO:0000318"/>
    <property type="project" value="GO_Central"/>
</dbReference>
<dbReference type="GO" id="GO:1901827">
    <property type="term" value="P:zeaxanthin biosynthetic process"/>
    <property type="evidence" value="ECO:0000250"/>
    <property type="project" value="UniProtKB"/>
</dbReference>
<dbReference type="InterPro" id="IPR004294">
    <property type="entry name" value="Carotenoid_Oase"/>
</dbReference>
<dbReference type="PANTHER" id="PTHR10543">
    <property type="entry name" value="BETA-CAROTENE DIOXYGENASE"/>
    <property type="match status" value="1"/>
</dbReference>
<dbReference type="PANTHER" id="PTHR10543:SF57">
    <property type="entry name" value="RETINOID ISOMEROHYDROLASE"/>
    <property type="match status" value="1"/>
</dbReference>
<dbReference type="Pfam" id="PF03055">
    <property type="entry name" value="RPE65"/>
    <property type="match status" value="1"/>
</dbReference>
<feature type="initiator methionine" description="Removed" evidence="3">
    <location>
        <position position="1"/>
    </location>
</feature>
<feature type="chain" id="PRO_0000143940" description="Retinoid isomerohydrolase">
    <location>
        <begin position="2"/>
        <end position="533"/>
    </location>
</feature>
<feature type="binding site" evidence="6">
    <location>
        <position position="180"/>
    </location>
    <ligand>
        <name>Fe cation</name>
        <dbReference type="ChEBI" id="CHEBI:24875"/>
        <note>catalytic</note>
    </ligand>
</feature>
<feature type="binding site" evidence="6">
    <location>
        <position position="241"/>
    </location>
    <ligand>
        <name>Fe cation</name>
        <dbReference type="ChEBI" id="CHEBI:24875"/>
        <note>catalytic</note>
    </ligand>
</feature>
<feature type="binding site" evidence="6">
    <location>
        <position position="313"/>
    </location>
    <ligand>
        <name>Fe cation</name>
        <dbReference type="ChEBI" id="CHEBI:24875"/>
        <note>catalytic</note>
    </ligand>
</feature>
<feature type="binding site" evidence="6">
    <location>
        <position position="527"/>
    </location>
    <ligand>
        <name>Fe cation</name>
        <dbReference type="ChEBI" id="CHEBI:24875"/>
        <note>catalytic</note>
    </ligand>
</feature>
<feature type="modified residue" description="N-acetylserine" evidence="3">
    <location>
        <position position="2"/>
    </location>
</feature>
<feature type="modified residue" description="Phosphothreonine" evidence="2">
    <location>
        <position position="101"/>
    </location>
</feature>
<feature type="modified residue" description="Phosphothreonine" evidence="2">
    <location>
        <position position="105"/>
    </location>
</feature>
<feature type="modified residue" description="N6-acetyllysine" evidence="2">
    <location>
        <position position="113"/>
    </location>
</feature>
<feature type="modified residue" description="Phosphoserine" evidence="2">
    <location>
        <position position="117"/>
    </location>
</feature>
<feature type="lipid moiety-binding region" description="S-palmitoyl cysteine; in membrane form" evidence="6">
    <location>
        <position position="112"/>
    </location>
</feature>
<feature type="lipid moiety-binding region" description="S-palmitoyl cysteine; in membrane form" evidence="3">
    <location>
        <position position="231"/>
    </location>
</feature>
<feature type="lipid moiety-binding region" description="S-palmitoyl cysteine; in membrane form" evidence="3">
    <location>
        <position position="329"/>
    </location>
</feature>
<feature type="lipid moiety-binding region" description="S-palmitoyl cysteine; in membrane form" evidence="3">
    <location>
        <position position="330"/>
    </location>
</feature>
<feature type="sequence conflict" description="In Ref. 1; AAC37306." evidence="8" ref="1">
    <original>L</original>
    <variation>S</variation>
    <location>
        <position position="341"/>
    </location>
</feature>
<feature type="helix" evidence="11">
    <location>
        <begin position="11"/>
        <end position="16"/>
    </location>
</feature>
<feature type="strand" evidence="11">
    <location>
        <begin position="29"/>
        <end position="32"/>
    </location>
</feature>
<feature type="strand" evidence="11">
    <location>
        <begin position="40"/>
        <end position="49"/>
    </location>
</feature>
<feature type="turn" evidence="11">
    <location>
        <begin position="60"/>
        <end position="62"/>
    </location>
</feature>
<feature type="strand" evidence="11">
    <location>
        <begin position="63"/>
        <end position="73"/>
    </location>
</feature>
<feature type="strand" evidence="11">
    <location>
        <begin position="76"/>
        <end position="83"/>
    </location>
</feature>
<feature type="helix" evidence="11">
    <location>
        <begin position="87"/>
        <end position="95"/>
    </location>
</feature>
<feature type="strand" evidence="11">
    <location>
        <begin position="134"/>
        <end position="139"/>
    </location>
</feature>
<feature type="strand" evidence="11">
    <location>
        <begin position="142"/>
        <end position="146"/>
    </location>
</feature>
<feature type="strand" evidence="11">
    <location>
        <begin position="148"/>
        <end position="155"/>
    </location>
</feature>
<feature type="turn" evidence="11">
    <location>
        <begin position="157"/>
        <end position="159"/>
    </location>
</feature>
<feature type="strand" evidence="11">
    <location>
        <begin position="162"/>
        <end position="167"/>
    </location>
</feature>
<feature type="helix" evidence="11">
    <location>
        <begin position="168"/>
        <end position="170"/>
    </location>
</feature>
<feature type="strand" evidence="11">
    <location>
        <begin position="189"/>
        <end position="195"/>
    </location>
</feature>
<feature type="helix" evidence="10">
    <location>
        <begin position="198"/>
        <end position="200"/>
    </location>
</feature>
<feature type="strand" evidence="11">
    <location>
        <begin position="203"/>
        <end position="209"/>
    </location>
</feature>
<feature type="helix" evidence="11">
    <location>
        <begin position="219"/>
        <end position="222"/>
    </location>
</feature>
<feature type="strand" evidence="11">
    <location>
        <begin position="224"/>
        <end position="230"/>
    </location>
</feature>
<feature type="strand" evidence="13">
    <location>
        <begin position="232"/>
        <end position="235"/>
    </location>
</feature>
<feature type="strand" evidence="11">
    <location>
        <begin position="247"/>
        <end position="254"/>
    </location>
</feature>
<feature type="strand" evidence="11">
    <location>
        <begin position="256"/>
        <end position="259"/>
    </location>
</feature>
<feature type="helix" evidence="11">
    <location>
        <begin position="261"/>
        <end position="264"/>
    </location>
</feature>
<feature type="helix" evidence="12">
    <location>
        <begin position="268"/>
        <end position="271"/>
    </location>
</feature>
<feature type="helix" evidence="11">
    <location>
        <begin position="276"/>
        <end position="278"/>
    </location>
</feature>
<feature type="strand" evidence="11">
    <location>
        <begin position="279"/>
        <end position="281"/>
    </location>
</feature>
<feature type="strand" evidence="14">
    <location>
        <begin position="283"/>
        <end position="285"/>
    </location>
</feature>
<feature type="strand" evidence="11">
    <location>
        <begin position="287"/>
        <end position="293"/>
    </location>
</feature>
<feature type="turn" evidence="11">
    <location>
        <begin position="294"/>
        <end position="297"/>
    </location>
</feature>
<feature type="strand" evidence="11">
    <location>
        <begin position="298"/>
        <end position="306"/>
    </location>
</feature>
<feature type="strand" evidence="11">
    <location>
        <begin position="309"/>
        <end position="320"/>
    </location>
</feature>
<feature type="strand" evidence="11">
    <location>
        <begin position="323"/>
        <end position="335"/>
    </location>
</feature>
<feature type="helix" evidence="11">
    <location>
        <begin position="337"/>
        <end position="340"/>
    </location>
</feature>
<feature type="helix" evidence="11">
    <location>
        <begin position="343"/>
        <end position="346"/>
    </location>
</feature>
<feature type="helix" evidence="11">
    <location>
        <begin position="350"/>
        <end position="356"/>
    </location>
</feature>
<feature type="turn" evidence="11">
    <location>
        <begin position="357"/>
        <end position="359"/>
    </location>
</feature>
<feature type="strand" evidence="11">
    <location>
        <begin position="362"/>
        <end position="372"/>
    </location>
</feature>
<feature type="helix" evidence="11">
    <location>
        <begin position="376"/>
        <end position="378"/>
    </location>
</feature>
<feature type="strand" evidence="11">
    <location>
        <begin position="392"/>
        <end position="395"/>
    </location>
</feature>
<feature type="strand" evidence="11">
    <location>
        <begin position="399"/>
        <end position="404"/>
    </location>
</feature>
<feature type="strand" evidence="11">
    <location>
        <begin position="406"/>
        <end position="409"/>
    </location>
</feature>
<feature type="strand" evidence="11">
    <location>
        <begin position="414"/>
        <end position="420"/>
    </location>
</feature>
<feature type="helix" evidence="11">
    <location>
        <begin position="423"/>
        <end position="426"/>
    </location>
</feature>
<feature type="strand" evidence="11">
    <location>
        <begin position="433"/>
        <end position="440"/>
    </location>
</feature>
<feature type="strand" evidence="11">
    <location>
        <begin position="443"/>
        <end position="451"/>
    </location>
</feature>
<feature type="turn" evidence="11">
    <location>
        <begin position="452"/>
        <end position="454"/>
    </location>
</feature>
<feature type="strand" evidence="11">
    <location>
        <begin position="457"/>
        <end position="460"/>
    </location>
</feature>
<feature type="strand" evidence="11">
    <location>
        <begin position="471"/>
        <end position="474"/>
    </location>
</feature>
<feature type="strand" evidence="9">
    <location>
        <begin position="480"/>
        <end position="482"/>
    </location>
</feature>
<feature type="strand" evidence="11">
    <location>
        <begin position="484"/>
        <end position="491"/>
    </location>
</feature>
<feature type="strand" evidence="12">
    <location>
        <begin position="494"/>
        <end position="497"/>
    </location>
</feature>
<feature type="strand" evidence="11">
    <location>
        <begin position="499"/>
        <end position="506"/>
    </location>
</feature>
<feature type="turn" evidence="11">
    <location>
        <begin position="507"/>
        <end position="509"/>
    </location>
</feature>
<feature type="strand" evidence="11">
    <location>
        <begin position="512"/>
        <end position="520"/>
    </location>
</feature>
<feature type="strand" evidence="11">
    <location>
        <begin position="527"/>
        <end position="532"/>
    </location>
</feature>
<accession>Q28175</accession>
<accession>A0A140T8B8</accession>
<accession>Q05661</accession>
<reference key="1">
    <citation type="journal article" date="1993" name="J. Biol. Chem.">
        <title>Molecular cloning and expression of a novel retinal pigment epithelium-specific microsomal protein that is translationally regulated in vitro.</title>
        <authorList>
            <person name="Hamel C.P."/>
            <person name="Tsilou E."/>
            <person name="Pfeffer B.A."/>
            <person name="Hooks J.J."/>
            <person name="Detrick B."/>
            <person name="Redmond T.M."/>
        </authorList>
    </citation>
    <scope>NUCLEOTIDE SEQUENCE [MRNA]</scope>
    <scope>PARTIAL PROTEIN SEQUENCE</scope>
    <source>
        <tissue>Retinal pigment epithelium</tissue>
    </source>
</reference>
<reference key="2">
    <citation type="journal article" date="1993" name="J. Biol. Chem.">
        <title>The retinal pigment epithelial membrane receptor for plasma retinol binding protein: isolation cDNA cloning and expression of the 63 kDa protein.</title>
        <authorList>
            <person name="Bavik C.O."/>
            <person name="Hellman U."/>
            <person name="Wernstedt C."/>
            <person name="Eriksson U."/>
        </authorList>
    </citation>
    <scope>NUCLEOTIDE SEQUENCE [MRNA]</scope>
    <source>
        <strain>Steinholtz</strain>
        <tissue>Eye</tissue>
    </source>
</reference>
<reference key="3">
    <citation type="submission" date="2018-03" db="EMBL/GenBank/DDBJ databases">
        <title>ARS-UCD1.2.</title>
        <authorList>
            <person name="Rosen B.D."/>
            <person name="Bickhart D.M."/>
            <person name="Koren S."/>
            <person name="Schnabel R.D."/>
            <person name="Hall R."/>
            <person name="Zimin A."/>
            <person name="Dreischer C."/>
            <person name="Schultheiss S."/>
            <person name="Schroeder S.G."/>
            <person name="Elsik C.G."/>
            <person name="Couldrey C."/>
            <person name="Liu G.E."/>
            <person name="Van Tassell C.P."/>
            <person name="Phillippy A.M."/>
            <person name="Smith T.P.L."/>
            <person name="Medrano J.F."/>
        </authorList>
    </citation>
    <scope>NUCLEOTIDE SEQUENCE [LARGE SCALE GENOMIC DNA]</scope>
    <source>
        <strain>Hereford</strain>
    </source>
</reference>
<reference key="4">
    <citation type="journal article" date="2009" name="J. Biol. Chem.">
        <title>Identification of a novel palmitylation site essential for membrane association and isomerohydrolase activity of RPE65.</title>
        <authorList>
            <person name="Takahashi Y."/>
            <person name="Moiseyev G."/>
            <person name="Ablonczy Z."/>
            <person name="Chen Y."/>
            <person name="Crouch R.K."/>
            <person name="Ma J.X."/>
        </authorList>
    </citation>
    <scope>PROTEIN SEQUENCE OF 98-118</scope>
    <scope>PALMITOYLATION</scope>
    <scope>IDENTIFICATION BY MASS SPECTROMETRY</scope>
</reference>
<reference key="5">
    <citation type="journal article" date="2004" name="Cell">
        <title>A palmitoylation switch mechanism in the regulation of the visual cycle.</title>
        <authorList>
            <person name="Xue L."/>
            <person name="Gollapalli D.R."/>
            <person name="Maiti P."/>
            <person name="Jahng W.J."/>
            <person name="Rando R.R."/>
        </authorList>
    </citation>
    <scope>ACETYLATION AT SER-2</scope>
    <scope>PALMITOYLATION AT CYS-231; CYS-329 AND CYS-330</scope>
    <scope>IDENTIFICATION BY MASS SPECTROMETRY</scope>
    <scope>FUNCTION</scope>
</reference>
<reference key="6">
    <citation type="journal article" date="2005" name="Cell">
        <title>Rpe65 is the retinoid isomerase in bovine retinal pigment epithelium.</title>
        <authorList>
            <person name="Jin M."/>
            <person name="Li S."/>
            <person name="Moghrabi W.N."/>
            <person name="Sun H."/>
            <person name="Travis G.H."/>
        </authorList>
    </citation>
    <scope>CATALYTIC ACTIVITY</scope>
    <scope>FUNCTION</scope>
    <scope>BIOPHYSICOCHEMICAL PROPERTIES</scope>
</reference>
<reference key="7">
    <citation type="journal article" date="2009" name="Proc. Natl. Acad. Sci. U.S.A.">
        <title>Crystal structure of native RPE65, the retinoid isomerase of the visual cycle.</title>
        <authorList>
            <person name="Kiser P.D."/>
            <person name="Golczak M."/>
            <person name="Lodowski D.T."/>
            <person name="Chance M.R."/>
            <person name="Palczewski K."/>
        </authorList>
    </citation>
    <scope>X-RAY CRYSTALLOGRAPHY (2.14 ANGSTROMS) IN COMPLEX WITH IRON ION</scope>
    <scope>CATALYTIC ACTIVITY</scope>
    <scope>FUNCTION</scope>
    <scope>SUBCELLULAR LOCATION</scope>
    <scope>PALMITOYLATION AT CYS-112</scope>
    <scope>IDENTIFICATION BY MASS SPECTROMETRY</scope>
    <scope>COFACTOR</scope>
    <scope>TISSUE SPECIFICITY</scope>
    <scope>METAL-BINDING</scope>
</reference>
<reference key="8">
    <citation type="journal article" date="2010" name="J. Biol. Chem.">
        <title>Importance of membrane structural integrity for RPE65 retinoid isomerization activity.</title>
        <authorList>
            <person name="Golczak M."/>
            <person name="Kiser P.D."/>
            <person name="Lodowski D.T."/>
            <person name="Maeda A."/>
            <person name="Palczewski K."/>
        </authorList>
    </citation>
    <scope>X-RAY CRYSTALLOGRAPHY (1.9 ANGSTROMS) IN COMPLEX WITH IRON ION</scope>
    <scope>CATALYTIC ACTIVITY</scope>
    <scope>FUNCTION</scope>
    <scope>SUBCELLULAR LOCATION</scope>
    <scope>COFACTOR</scope>
    <scope>TISSUE SPECIFICITY</scope>
</reference>
<name>RPE65_BOVIN</name>